<reference key="1">
    <citation type="journal article" date="2002" name="Lancet">
        <title>Genome and virulence determinants of high virulence community-acquired MRSA.</title>
        <authorList>
            <person name="Baba T."/>
            <person name="Takeuchi F."/>
            <person name="Kuroda M."/>
            <person name="Yuzawa H."/>
            <person name="Aoki K."/>
            <person name="Oguchi A."/>
            <person name="Nagai Y."/>
            <person name="Iwama N."/>
            <person name="Asano K."/>
            <person name="Naimi T."/>
            <person name="Kuroda H."/>
            <person name="Cui L."/>
            <person name="Yamamoto K."/>
            <person name="Hiramatsu K."/>
        </authorList>
    </citation>
    <scope>NUCLEOTIDE SEQUENCE [LARGE SCALE GENOMIC DNA]</scope>
    <source>
        <strain>MW2</strain>
    </source>
</reference>
<keyword id="KW-0227">DNA damage</keyword>
<keyword id="KW-0234">DNA repair</keyword>
<keyword id="KW-0378">Hydrolase</keyword>
<evidence type="ECO:0000255" key="1">
    <source>
        <dbReference type="HAMAP-Rule" id="MF_00527"/>
    </source>
</evidence>
<dbReference type="EC" id="3.2.2.-" evidence="1"/>
<dbReference type="EMBL" id="BA000033">
    <property type="protein sequence ID" value="BAB96130.1"/>
    <property type="molecule type" value="Genomic_DNA"/>
</dbReference>
<dbReference type="RefSeq" id="WP_000348300.1">
    <property type="nucleotide sequence ID" value="NC_003923.1"/>
</dbReference>
<dbReference type="SMR" id="P65416"/>
<dbReference type="KEGG" id="sam:MW2265"/>
<dbReference type="HOGENOM" id="CLU_060471_2_0_9"/>
<dbReference type="GO" id="GO:0003905">
    <property type="term" value="F:alkylbase DNA N-glycosylase activity"/>
    <property type="evidence" value="ECO:0007669"/>
    <property type="project" value="InterPro"/>
</dbReference>
<dbReference type="GO" id="GO:0003677">
    <property type="term" value="F:DNA binding"/>
    <property type="evidence" value="ECO:0007669"/>
    <property type="project" value="InterPro"/>
</dbReference>
<dbReference type="GO" id="GO:0006284">
    <property type="term" value="P:base-excision repair"/>
    <property type="evidence" value="ECO:0007669"/>
    <property type="project" value="InterPro"/>
</dbReference>
<dbReference type="CDD" id="cd00540">
    <property type="entry name" value="AAG"/>
    <property type="match status" value="1"/>
</dbReference>
<dbReference type="FunFam" id="3.10.300.10:FF:000001">
    <property type="entry name" value="Putative 3-methyladenine DNA glycosylase"/>
    <property type="match status" value="1"/>
</dbReference>
<dbReference type="Gene3D" id="3.10.300.10">
    <property type="entry name" value="Methylpurine-DNA glycosylase (MPG)"/>
    <property type="match status" value="1"/>
</dbReference>
<dbReference type="HAMAP" id="MF_00527">
    <property type="entry name" value="3MGH"/>
    <property type="match status" value="1"/>
</dbReference>
<dbReference type="InterPro" id="IPR011034">
    <property type="entry name" value="Formyl_transferase-like_C_sf"/>
</dbReference>
<dbReference type="InterPro" id="IPR003180">
    <property type="entry name" value="MPG"/>
</dbReference>
<dbReference type="InterPro" id="IPR036995">
    <property type="entry name" value="MPG_sf"/>
</dbReference>
<dbReference type="NCBIfam" id="TIGR00567">
    <property type="entry name" value="3mg"/>
    <property type="match status" value="1"/>
</dbReference>
<dbReference type="PANTHER" id="PTHR10429">
    <property type="entry name" value="DNA-3-METHYLADENINE GLYCOSYLASE"/>
    <property type="match status" value="1"/>
</dbReference>
<dbReference type="PANTHER" id="PTHR10429:SF0">
    <property type="entry name" value="DNA-3-METHYLADENINE GLYCOSYLASE"/>
    <property type="match status" value="1"/>
</dbReference>
<dbReference type="Pfam" id="PF02245">
    <property type="entry name" value="Pur_DNA_glyco"/>
    <property type="match status" value="1"/>
</dbReference>
<dbReference type="SUPFAM" id="SSF50486">
    <property type="entry name" value="FMT C-terminal domain-like"/>
    <property type="match status" value="1"/>
</dbReference>
<sequence>MDFVNNDTRQIAKNLLGVKVIYQDTTQTYTGYIVETEAYLGLNDRAAHGYGGKITPKVTSLYKRGGTIYAHVMHTHLLINFVTKSEGIPEGVLIRAIEPEEGLSAMFRNRGKKGYEVTNGPGKWTKAFNIPRAIDGATLNDCRLSIDTKNRKYPKDIIASPRIGIPNKGDWTHKSLRYTVKGNPFVSRMRKSDCMFPEDTWK</sequence>
<feature type="chain" id="PRO_0000100108" description="Putative 3-methyladenine DNA glycosylase">
    <location>
        <begin position="1"/>
        <end position="202"/>
    </location>
</feature>
<protein>
    <recommendedName>
        <fullName evidence="1">Putative 3-methyladenine DNA glycosylase</fullName>
        <ecNumber evidence="1">3.2.2.-</ecNumber>
    </recommendedName>
</protein>
<organism>
    <name type="scientific">Staphylococcus aureus (strain MW2)</name>
    <dbReference type="NCBI Taxonomy" id="196620"/>
    <lineage>
        <taxon>Bacteria</taxon>
        <taxon>Bacillati</taxon>
        <taxon>Bacillota</taxon>
        <taxon>Bacilli</taxon>
        <taxon>Bacillales</taxon>
        <taxon>Staphylococcaceae</taxon>
        <taxon>Staphylococcus</taxon>
    </lineage>
</organism>
<gene>
    <name type="ordered locus">MW2265</name>
</gene>
<comment type="similarity">
    <text evidence="1">Belongs to the DNA glycosylase MPG family.</text>
</comment>
<name>3MGH_STAAW</name>
<proteinExistence type="inferred from homology"/>
<accession>P65416</accession>
<accession>Q99RS9</accession>